<protein>
    <recommendedName>
        <fullName evidence="1">A-type ATP synthase subunit B</fullName>
    </recommendedName>
</protein>
<keyword id="KW-0066">ATP synthesis</keyword>
<keyword id="KW-1003">Cell membrane</keyword>
<keyword id="KW-0375">Hydrogen ion transport</keyword>
<keyword id="KW-0406">Ion transport</keyword>
<keyword id="KW-0472">Membrane</keyword>
<keyword id="KW-0813">Transport</keyword>
<dbReference type="EMBL" id="CP000504">
    <property type="protein sequence ID" value="ABL88428.1"/>
    <property type="molecule type" value="Genomic_DNA"/>
</dbReference>
<dbReference type="RefSeq" id="WP_011763003.1">
    <property type="nucleotide sequence ID" value="NC_008701.1"/>
</dbReference>
<dbReference type="SMR" id="A1RTZ6"/>
<dbReference type="STRING" id="384616.Pisl_1264"/>
<dbReference type="GeneID" id="4617359"/>
<dbReference type="KEGG" id="pis:Pisl_1264"/>
<dbReference type="eggNOG" id="arCOG00865">
    <property type="taxonomic scope" value="Archaea"/>
</dbReference>
<dbReference type="HOGENOM" id="CLU_022916_0_0_2"/>
<dbReference type="OrthoDB" id="32941at2157"/>
<dbReference type="Proteomes" id="UP000002595">
    <property type="component" value="Chromosome"/>
</dbReference>
<dbReference type="GO" id="GO:0005886">
    <property type="term" value="C:plasma membrane"/>
    <property type="evidence" value="ECO:0007669"/>
    <property type="project" value="UniProtKB-SubCell"/>
</dbReference>
<dbReference type="GO" id="GO:0005524">
    <property type="term" value="F:ATP binding"/>
    <property type="evidence" value="ECO:0007669"/>
    <property type="project" value="UniProtKB-UniRule"/>
</dbReference>
<dbReference type="GO" id="GO:0046933">
    <property type="term" value="F:proton-transporting ATP synthase activity, rotational mechanism"/>
    <property type="evidence" value="ECO:0007669"/>
    <property type="project" value="UniProtKB-UniRule"/>
</dbReference>
<dbReference type="GO" id="GO:0046961">
    <property type="term" value="F:proton-transporting ATPase activity, rotational mechanism"/>
    <property type="evidence" value="ECO:0007669"/>
    <property type="project" value="TreeGrafter"/>
</dbReference>
<dbReference type="GO" id="GO:0042777">
    <property type="term" value="P:proton motive force-driven plasma membrane ATP synthesis"/>
    <property type="evidence" value="ECO:0007669"/>
    <property type="project" value="UniProtKB-UniRule"/>
</dbReference>
<dbReference type="CDD" id="cd18112">
    <property type="entry name" value="ATP-synt_V_A-type_beta_C"/>
    <property type="match status" value="1"/>
</dbReference>
<dbReference type="CDD" id="cd18118">
    <property type="entry name" value="ATP-synt_V_A-type_beta_N"/>
    <property type="match status" value="1"/>
</dbReference>
<dbReference type="CDD" id="cd01135">
    <property type="entry name" value="V_A-ATPase_B"/>
    <property type="match status" value="1"/>
</dbReference>
<dbReference type="Gene3D" id="3.40.50.12240">
    <property type="match status" value="1"/>
</dbReference>
<dbReference type="HAMAP" id="MF_00310">
    <property type="entry name" value="ATP_synth_B_arch"/>
    <property type="match status" value="1"/>
</dbReference>
<dbReference type="InterPro" id="IPR055190">
    <property type="entry name" value="ATP-synt_VA_C"/>
</dbReference>
<dbReference type="InterPro" id="IPR004100">
    <property type="entry name" value="ATPase_F1/V1/A1_a/bsu_N"/>
</dbReference>
<dbReference type="InterPro" id="IPR000194">
    <property type="entry name" value="ATPase_F1/V1/A1_a/bsu_nucl-bd"/>
</dbReference>
<dbReference type="InterPro" id="IPR027417">
    <property type="entry name" value="P-loop_NTPase"/>
</dbReference>
<dbReference type="InterPro" id="IPR022879">
    <property type="entry name" value="V-ATPase_su_B/beta"/>
</dbReference>
<dbReference type="NCBIfam" id="NF003235">
    <property type="entry name" value="PRK04196.1"/>
    <property type="match status" value="1"/>
</dbReference>
<dbReference type="PANTHER" id="PTHR43389">
    <property type="entry name" value="V-TYPE PROTON ATPASE SUBUNIT B"/>
    <property type="match status" value="1"/>
</dbReference>
<dbReference type="PANTHER" id="PTHR43389:SF4">
    <property type="entry name" value="V-TYPE PROTON ATPASE SUBUNIT B"/>
    <property type="match status" value="1"/>
</dbReference>
<dbReference type="Pfam" id="PF00006">
    <property type="entry name" value="ATP-synt_ab"/>
    <property type="match status" value="1"/>
</dbReference>
<dbReference type="Pfam" id="PF02874">
    <property type="entry name" value="ATP-synt_ab_N"/>
    <property type="match status" value="1"/>
</dbReference>
<dbReference type="Pfam" id="PF22919">
    <property type="entry name" value="ATP-synt_VA_C"/>
    <property type="match status" value="1"/>
</dbReference>
<dbReference type="SUPFAM" id="SSF52540">
    <property type="entry name" value="P-loop containing nucleoside triphosphate hydrolases"/>
    <property type="match status" value="1"/>
</dbReference>
<name>AATB_PYRIL</name>
<evidence type="ECO:0000255" key="1">
    <source>
        <dbReference type="HAMAP-Rule" id="MF_00310"/>
    </source>
</evidence>
<evidence type="ECO:0000256" key="2">
    <source>
        <dbReference type="SAM" id="MobiDB-lite"/>
    </source>
</evidence>
<accession>A1RTZ6</accession>
<feature type="chain" id="PRO_1000059389" description="A-type ATP synthase subunit B">
    <location>
        <begin position="1"/>
        <end position="467"/>
    </location>
</feature>
<feature type="region of interest" description="Disordered" evidence="2">
    <location>
        <begin position="95"/>
        <end position="114"/>
    </location>
</feature>
<gene>
    <name evidence="1" type="primary">atpB</name>
    <name type="ordered locus">Pisl_1264</name>
</gene>
<organism>
    <name type="scientific">Pyrobaculum islandicum (strain DSM 4184 / JCM 9189 / GEO3)</name>
    <dbReference type="NCBI Taxonomy" id="384616"/>
    <lineage>
        <taxon>Archaea</taxon>
        <taxon>Thermoproteota</taxon>
        <taxon>Thermoprotei</taxon>
        <taxon>Thermoproteales</taxon>
        <taxon>Thermoproteaceae</taxon>
        <taxon>Pyrobaculum</taxon>
    </lineage>
</organism>
<sequence length="467" mass="52182">MLTPVVSYSTVREVKGPLIVIEKTRGVSYGEIGEVIGPDGEPRKVQVIEVGTDYAIAQVLGGTLGLPAKGSTVRFYGKTLKMPVSEELIGRILDGKGQPRDHMPLPPPEDFRDVNGEPLNPYSREYPEEPIETGISAIDGLYTLVRGQKLPIFSGTGLPHNMMAAQVVRQSTVRGSEEEFAVVFVGVGIKTEEALFFMDEFRRTGALRRAVAVLNLASDPVAERILAPRVGLTIAEYLAWQLGYHVLVVITDMTNYCEGLRELSSGRGELPGRRGYPGYMYTDLATIYERAGKAHGKKGSITQFPILTMPHDDITHPIPDLTGYITEGQLVLSRAMWGKGIYPPFDVIMSLSRLAKDAIGEGKTREDHKDVANTLISAYSKALEIRNLATLVGERNLGWRERRYLRFADAFEQKFIKQGYYERRSFEETLDIGWDVLSILPEDELTNARPQITQKFYRRHIFESVKL</sequence>
<comment type="function">
    <text evidence="1">Component of the A-type ATP synthase that produces ATP from ADP in the presence of a proton gradient across the membrane. The B chain is a regulatory subunit.</text>
</comment>
<comment type="subunit">
    <text evidence="1">Has multiple subunits with at least A(3), B(3), C, D, E, F, H, I and proteolipid K(x).</text>
</comment>
<comment type="subcellular location">
    <subcellularLocation>
        <location evidence="1">Cell membrane</location>
        <topology evidence="1">Peripheral membrane protein</topology>
    </subcellularLocation>
</comment>
<comment type="similarity">
    <text evidence="1">Belongs to the ATPase alpha/beta chains family.</text>
</comment>
<reference key="1">
    <citation type="submission" date="2006-12" db="EMBL/GenBank/DDBJ databases">
        <title>Complete sequence of Pyrobaculum islandicum DSM 4184.</title>
        <authorList>
            <person name="Copeland A."/>
            <person name="Lucas S."/>
            <person name="Lapidus A."/>
            <person name="Barry K."/>
            <person name="Detter J.C."/>
            <person name="Glavina del Rio T."/>
            <person name="Dalin E."/>
            <person name="Tice H."/>
            <person name="Pitluck S."/>
            <person name="Meincke L."/>
            <person name="Brettin T."/>
            <person name="Bruce D."/>
            <person name="Han C."/>
            <person name="Tapia R."/>
            <person name="Gilna P."/>
            <person name="Schmutz J."/>
            <person name="Larimer F."/>
            <person name="Land M."/>
            <person name="Hauser L."/>
            <person name="Kyrpides N."/>
            <person name="Mikhailova N."/>
            <person name="Cozen A.E."/>
            <person name="Fitz-Gibbon S.T."/>
            <person name="House C.H."/>
            <person name="Saltikov C."/>
            <person name="Lowe T."/>
            <person name="Richardson P."/>
        </authorList>
    </citation>
    <scope>NUCLEOTIDE SEQUENCE [LARGE SCALE GENOMIC DNA]</scope>
    <source>
        <strain>DSM 4184 / JCM 9189 / GEO3</strain>
    </source>
</reference>
<proteinExistence type="inferred from homology"/>